<protein>
    <recommendedName>
        <fullName>RNA exonuclease 4</fullName>
        <ecNumber>3.1.-.-</ecNumber>
    </recommendedName>
</protein>
<sequence length="294" mass="33313">MVLSSNWLSLQKSTDSDSVNKNKGGKKTKSNSKKRTVSVKKDKQYVDKKKKNGTGSKIMDMVANMNREIAKVEQERTKNTHADGQMINSEDRFESVLKQKLNEDVAKKSLSRTNGVGKYVSMDCEFVGVGPDGKDSALARVSIVNYYGNVVLDLFVRPKEPVTDWRTWVSGIKPHHMANAVTQEDCQKQVSNVLKGRILVGHSVHHDLTALMLSHPRRMIRDTSRHMPFRQKYSEGKTPSLKKLTKEILQLDIQDGEHSSIEDARATMLLYKSDKLEFEKLHNKQFGPSKPTQE</sequence>
<keyword id="KW-0269">Exonuclease</keyword>
<keyword id="KW-0378">Hydrolase</keyword>
<keyword id="KW-0540">Nuclease</keyword>
<keyword id="KW-0539">Nucleus</keyword>
<keyword id="KW-1185">Reference proteome</keyword>
<keyword id="KW-0698">rRNA processing</keyword>
<organism>
    <name type="scientific">Kluyveromyces lactis (strain ATCC 8585 / CBS 2359 / DSM 70799 / NBRC 1267 / NRRL Y-1140 / WM37)</name>
    <name type="common">Yeast</name>
    <name type="synonym">Candida sphaerica</name>
    <dbReference type="NCBI Taxonomy" id="284590"/>
    <lineage>
        <taxon>Eukaryota</taxon>
        <taxon>Fungi</taxon>
        <taxon>Dikarya</taxon>
        <taxon>Ascomycota</taxon>
        <taxon>Saccharomycotina</taxon>
        <taxon>Saccharomycetes</taxon>
        <taxon>Saccharomycetales</taxon>
        <taxon>Saccharomycetaceae</taxon>
        <taxon>Kluyveromyces</taxon>
    </lineage>
</organism>
<reference key="1">
    <citation type="journal article" date="2004" name="Nature">
        <title>Genome evolution in yeasts.</title>
        <authorList>
            <person name="Dujon B."/>
            <person name="Sherman D."/>
            <person name="Fischer G."/>
            <person name="Durrens P."/>
            <person name="Casaregola S."/>
            <person name="Lafontaine I."/>
            <person name="de Montigny J."/>
            <person name="Marck C."/>
            <person name="Neuveglise C."/>
            <person name="Talla E."/>
            <person name="Goffard N."/>
            <person name="Frangeul L."/>
            <person name="Aigle M."/>
            <person name="Anthouard V."/>
            <person name="Babour A."/>
            <person name="Barbe V."/>
            <person name="Barnay S."/>
            <person name="Blanchin S."/>
            <person name="Beckerich J.-M."/>
            <person name="Beyne E."/>
            <person name="Bleykasten C."/>
            <person name="Boisrame A."/>
            <person name="Boyer J."/>
            <person name="Cattolico L."/>
            <person name="Confanioleri F."/>
            <person name="de Daruvar A."/>
            <person name="Despons L."/>
            <person name="Fabre E."/>
            <person name="Fairhead C."/>
            <person name="Ferry-Dumazet H."/>
            <person name="Groppi A."/>
            <person name="Hantraye F."/>
            <person name="Hennequin C."/>
            <person name="Jauniaux N."/>
            <person name="Joyet P."/>
            <person name="Kachouri R."/>
            <person name="Kerrest A."/>
            <person name="Koszul R."/>
            <person name="Lemaire M."/>
            <person name="Lesur I."/>
            <person name="Ma L."/>
            <person name="Muller H."/>
            <person name="Nicaud J.-M."/>
            <person name="Nikolski M."/>
            <person name="Oztas S."/>
            <person name="Ozier-Kalogeropoulos O."/>
            <person name="Pellenz S."/>
            <person name="Potier S."/>
            <person name="Richard G.-F."/>
            <person name="Straub M.-L."/>
            <person name="Suleau A."/>
            <person name="Swennen D."/>
            <person name="Tekaia F."/>
            <person name="Wesolowski-Louvel M."/>
            <person name="Westhof E."/>
            <person name="Wirth B."/>
            <person name="Zeniou-Meyer M."/>
            <person name="Zivanovic Y."/>
            <person name="Bolotin-Fukuhara M."/>
            <person name="Thierry A."/>
            <person name="Bouchier C."/>
            <person name="Caudron B."/>
            <person name="Scarpelli C."/>
            <person name="Gaillardin C."/>
            <person name="Weissenbach J."/>
            <person name="Wincker P."/>
            <person name="Souciet J.-L."/>
        </authorList>
    </citation>
    <scope>NUCLEOTIDE SEQUENCE [LARGE SCALE GENOMIC DNA]</scope>
    <source>
        <strain>ATCC 8585 / CBS 2359 / DSM 70799 / NBRC 1267 / NRRL Y-1140 / WM37</strain>
    </source>
</reference>
<feature type="chain" id="PRO_0000131697" description="RNA exonuclease 4">
    <location>
        <begin position="1"/>
        <end position="294"/>
    </location>
</feature>
<feature type="domain" description="Exonuclease">
    <location>
        <begin position="119"/>
        <end position="271"/>
    </location>
</feature>
<feature type="region of interest" description="Disordered" evidence="2">
    <location>
        <begin position="1"/>
        <end position="56"/>
    </location>
</feature>
<feature type="compositionally biased region" description="Polar residues" evidence="2">
    <location>
        <begin position="1"/>
        <end position="13"/>
    </location>
</feature>
<feature type="compositionally biased region" description="Basic residues" evidence="2">
    <location>
        <begin position="23"/>
        <end position="38"/>
    </location>
</feature>
<dbReference type="EC" id="3.1.-.-"/>
<dbReference type="EMBL" id="CR382125">
    <property type="protein sequence ID" value="CAG99843.1"/>
    <property type="molecule type" value="Genomic_DNA"/>
</dbReference>
<dbReference type="RefSeq" id="XP_454756.1">
    <property type="nucleotide sequence ID" value="XM_454756.1"/>
</dbReference>
<dbReference type="SMR" id="Q6CMT3"/>
<dbReference type="FunCoup" id="Q6CMT3">
    <property type="interactions" value="854"/>
</dbReference>
<dbReference type="STRING" id="284590.Q6CMT3"/>
<dbReference type="PaxDb" id="284590-Q6CMT3"/>
<dbReference type="KEGG" id="kla:KLLA0_E17865g"/>
<dbReference type="eggNOG" id="KOG2249">
    <property type="taxonomic scope" value="Eukaryota"/>
</dbReference>
<dbReference type="HOGENOM" id="CLU_022453_2_0_1"/>
<dbReference type="InParanoid" id="Q6CMT3"/>
<dbReference type="OMA" id="TMLIYKS"/>
<dbReference type="Proteomes" id="UP000000598">
    <property type="component" value="Chromosome E"/>
</dbReference>
<dbReference type="GO" id="GO:0005634">
    <property type="term" value="C:nucleus"/>
    <property type="evidence" value="ECO:0007669"/>
    <property type="project" value="UniProtKB-SubCell"/>
</dbReference>
<dbReference type="GO" id="GO:0008408">
    <property type="term" value="F:3'-5' exonuclease activity"/>
    <property type="evidence" value="ECO:0007669"/>
    <property type="project" value="InterPro"/>
</dbReference>
<dbReference type="GO" id="GO:0003676">
    <property type="term" value="F:nucleic acid binding"/>
    <property type="evidence" value="ECO:0007669"/>
    <property type="project" value="InterPro"/>
</dbReference>
<dbReference type="GO" id="GO:0000027">
    <property type="term" value="P:ribosomal large subunit assembly"/>
    <property type="evidence" value="ECO:0007669"/>
    <property type="project" value="TreeGrafter"/>
</dbReference>
<dbReference type="GO" id="GO:0006364">
    <property type="term" value="P:rRNA processing"/>
    <property type="evidence" value="ECO:0007669"/>
    <property type="project" value="UniProtKB-KW"/>
</dbReference>
<dbReference type="CDD" id="cd06144">
    <property type="entry name" value="REX4_like"/>
    <property type="match status" value="1"/>
</dbReference>
<dbReference type="FunFam" id="3.30.420.10:FF:000007">
    <property type="entry name" value="Interferon-stimulated exonuclease gene 20"/>
    <property type="match status" value="1"/>
</dbReference>
<dbReference type="Gene3D" id="3.30.420.10">
    <property type="entry name" value="Ribonuclease H-like superfamily/Ribonuclease H"/>
    <property type="match status" value="1"/>
</dbReference>
<dbReference type="InterPro" id="IPR013520">
    <property type="entry name" value="Exonuclease_RNaseT/DNA_pol3"/>
</dbReference>
<dbReference type="InterPro" id="IPR037431">
    <property type="entry name" value="REX4_DEDDh_dom"/>
</dbReference>
<dbReference type="InterPro" id="IPR047021">
    <property type="entry name" value="REXO1/3/4-like"/>
</dbReference>
<dbReference type="InterPro" id="IPR012337">
    <property type="entry name" value="RNaseH-like_sf"/>
</dbReference>
<dbReference type="InterPro" id="IPR036397">
    <property type="entry name" value="RNaseH_sf"/>
</dbReference>
<dbReference type="PANTHER" id="PTHR12801:SF45">
    <property type="entry name" value="RNA EXONUCLEASE 4"/>
    <property type="match status" value="1"/>
</dbReference>
<dbReference type="PANTHER" id="PTHR12801">
    <property type="entry name" value="RNA EXONUCLEASE REXO1 / RECO3 FAMILY MEMBER-RELATED"/>
    <property type="match status" value="1"/>
</dbReference>
<dbReference type="Pfam" id="PF00929">
    <property type="entry name" value="RNase_T"/>
    <property type="match status" value="1"/>
</dbReference>
<dbReference type="SMART" id="SM00479">
    <property type="entry name" value="EXOIII"/>
    <property type="match status" value="1"/>
</dbReference>
<dbReference type="SUPFAM" id="SSF53098">
    <property type="entry name" value="Ribonuclease H-like"/>
    <property type="match status" value="1"/>
</dbReference>
<evidence type="ECO:0000250" key="1"/>
<evidence type="ECO:0000256" key="2">
    <source>
        <dbReference type="SAM" id="MobiDB-lite"/>
    </source>
</evidence>
<evidence type="ECO:0000305" key="3"/>
<accession>Q6CMT3</accession>
<comment type="function">
    <text evidence="1">Exoribonuclease involved in ribosome biosynthesis. Involved in the processing of ITS1, the internal transcribed spacer localized between the 18S and 5.8S rRNAs (By similarity).</text>
</comment>
<comment type="subcellular location">
    <subcellularLocation>
        <location evidence="1">Nucleus</location>
    </subcellularLocation>
</comment>
<comment type="similarity">
    <text evidence="3">Belongs to the REXO4 family.</text>
</comment>
<gene>
    <name type="primary">REX4</name>
    <name type="ordered locus">KLLA0E17941g</name>
</gene>
<proteinExistence type="inferred from homology"/>
<name>REXO4_KLULA</name>